<evidence type="ECO:0000255" key="1">
    <source>
        <dbReference type="HAMAP-Rule" id="MF_00675"/>
    </source>
</evidence>
<dbReference type="EC" id="5.3.1.12" evidence="1"/>
<dbReference type="EMBL" id="AP009240">
    <property type="protein sequence ID" value="BAG78897.1"/>
    <property type="molecule type" value="Genomic_DNA"/>
</dbReference>
<dbReference type="RefSeq" id="WP_000187441.1">
    <property type="nucleotide sequence ID" value="NC_011415.1"/>
</dbReference>
<dbReference type="SMR" id="B6I464"/>
<dbReference type="GeneID" id="75205101"/>
<dbReference type="KEGG" id="ecy:ECSE_3373"/>
<dbReference type="HOGENOM" id="CLU_044465_1_0_6"/>
<dbReference type="UniPathway" id="UPA00246"/>
<dbReference type="Proteomes" id="UP000008199">
    <property type="component" value="Chromosome"/>
</dbReference>
<dbReference type="GO" id="GO:0008880">
    <property type="term" value="F:glucuronate isomerase activity"/>
    <property type="evidence" value="ECO:0007669"/>
    <property type="project" value="UniProtKB-UniRule"/>
</dbReference>
<dbReference type="GO" id="GO:0019698">
    <property type="term" value="P:D-galacturonate catabolic process"/>
    <property type="evidence" value="ECO:0007669"/>
    <property type="project" value="TreeGrafter"/>
</dbReference>
<dbReference type="GO" id="GO:0042840">
    <property type="term" value="P:D-glucuronate catabolic process"/>
    <property type="evidence" value="ECO:0007669"/>
    <property type="project" value="TreeGrafter"/>
</dbReference>
<dbReference type="FunFam" id="1.10.2020.10:FF:000001">
    <property type="entry name" value="Uronate isomerase"/>
    <property type="match status" value="1"/>
</dbReference>
<dbReference type="Gene3D" id="3.20.20.140">
    <property type="entry name" value="Metal-dependent hydrolases"/>
    <property type="match status" value="1"/>
</dbReference>
<dbReference type="Gene3D" id="1.10.2020.10">
    <property type="entry name" value="uronate isomerase, domain 2, chain A"/>
    <property type="match status" value="1"/>
</dbReference>
<dbReference type="HAMAP" id="MF_00675">
    <property type="entry name" value="UxaC"/>
    <property type="match status" value="1"/>
</dbReference>
<dbReference type="InterPro" id="IPR032466">
    <property type="entry name" value="Metal_Hydrolase"/>
</dbReference>
<dbReference type="InterPro" id="IPR003766">
    <property type="entry name" value="Uronate_isomerase"/>
</dbReference>
<dbReference type="NCBIfam" id="NF002794">
    <property type="entry name" value="PRK02925.1"/>
    <property type="match status" value="1"/>
</dbReference>
<dbReference type="PANTHER" id="PTHR30068">
    <property type="entry name" value="URONATE ISOMERASE"/>
    <property type="match status" value="1"/>
</dbReference>
<dbReference type="PANTHER" id="PTHR30068:SF4">
    <property type="entry name" value="URONATE ISOMERASE"/>
    <property type="match status" value="1"/>
</dbReference>
<dbReference type="Pfam" id="PF02614">
    <property type="entry name" value="UxaC"/>
    <property type="match status" value="1"/>
</dbReference>
<dbReference type="SUPFAM" id="SSF51556">
    <property type="entry name" value="Metallo-dependent hydrolases"/>
    <property type="match status" value="1"/>
</dbReference>
<sequence length="470" mass="53983">MTPFMTEDFLLDTEFARRLYHDYAKDQPIFDYHCHLPPQQIAEDYRFKNLYDIWLKGDHYKWRAMRTNGVAERLCTGDASDREKFDAWAATVPHTIGNPLYHWTHLELRRPFGITGKLLSPSTADEIWNECNELLAQDNFSARGIMQQMNVKMVGTTDDPIDSLEHHAEIAKDGSFTIKVLPSWRPDKAFNIEQATFNDYMAKLGEVSDTDIRRFADLQTALTKRLDHFAAHGCKVSDHALDVVMFAEANEAELDSILARRLAGEPLSEHEVAQFKTAVLVFLGAEYARRGWVQQYHIGALRNNNLRQFKLLGPDVGFDSINDRPMAEELSKLLSKQNEENLLPKTILYCLNPRDNEVLGTMIGNFQGEGMPGKMQFGSGWWFNDQKDGMERQMTQLAQLGLLSRFVGMLTDSRSFLSYTRHEYFRRILCQMIGRWVEAGEAPADINLLGEMVKNICFNNARDYFAIELN</sequence>
<organism>
    <name type="scientific">Escherichia coli (strain SE11)</name>
    <dbReference type="NCBI Taxonomy" id="409438"/>
    <lineage>
        <taxon>Bacteria</taxon>
        <taxon>Pseudomonadati</taxon>
        <taxon>Pseudomonadota</taxon>
        <taxon>Gammaproteobacteria</taxon>
        <taxon>Enterobacterales</taxon>
        <taxon>Enterobacteriaceae</taxon>
        <taxon>Escherichia</taxon>
    </lineage>
</organism>
<proteinExistence type="inferred from homology"/>
<reference key="1">
    <citation type="journal article" date="2008" name="DNA Res.">
        <title>Complete genome sequence and comparative analysis of the wild-type commensal Escherichia coli strain SE11 isolated from a healthy adult.</title>
        <authorList>
            <person name="Oshima K."/>
            <person name="Toh H."/>
            <person name="Ogura Y."/>
            <person name="Sasamoto H."/>
            <person name="Morita H."/>
            <person name="Park S.-H."/>
            <person name="Ooka T."/>
            <person name="Iyoda S."/>
            <person name="Taylor T.D."/>
            <person name="Hayashi T."/>
            <person name="Itoh K."/>
            <person name="Hattori M."/>
        </authorList>
    </citation>
    <scope>NUCLEOTIDE SEQUENCE [LARGE SCALE GENOMIC DNA]</scope>
    <source>
        <strain>SE11</strain>
    </source>
</reference>
<gene>
    <name evidence="1" type="primary">uxaC</name>
    <name type="ordered locus">ECSE_3373</name>
</gene>
<keyword id="KW-0413">Isomerase</keyword>
<comment type="catalytic activity">
    <reaction evidence="1">
        <text>D-glucuronate = D-fructuronate</text>
        <dbReference type="Rhea" id="RHEA:13049"/>
        <dbReference type="ChEBI" id="CHEBI:58720"/>
        <dbReference type="ChEBI" id="CHEBI:59863"/>
        <dbReference type="EC" id="5.3.1.12"/>
    </reaction>
</comment>
<comment type="catalytic activity">
    <reaction evidence="1">
        <text>aldehydo-D-galacturonate = keto-D-tagaturonate</text>
        <dbReference type="Rhea" id="RHEA:27702"/>
        <dbReference type="ChEBI" id="CHEBI:12952"/>
        <dbReference type="ChEBI" id="CHEBI:17886"/>
        <dbReference type="EC" id="5.3.1.12"/>
    </reaction>
</comment>
<comment type="pathway">
    <text evidence="1">Carbohydrate metabolism; pentose and glucuronate interconversion.</text>
</comment>
<comment type="similarity">
    <text evidence="1">Belongs to the metallo-dependent hydrolases superfamily. Uronate isomerase family.</text>
</comment>
<name>UXAC_ECOSE</name>
<accession>B6I464</accession>
<protein>
    <recommendedName>
        <fullName evidence="1">Uronate isomerase</fullName>
        <ecNumber evidence="1">5.3.1.12</ecNumber>
    </recommendedName>
    <alternativeName>
        <fullName evidence="1">Glucuronate isomerase</fullName>
    </alternativeName>
    <alternativeName>
        <fullName evidence="1">Uronic isomerase</fullName>
    </alternativeName>
</protein>
<feature type="chain" id="PRO_1000131594" description="Uronate isomerase">
    <location>
        <begin position="1"/>
        <end position="470"/>
    </location>
</feature>